<proteinExistence type="inferred from homology"/>
<organism>
    <name type="scientific">Listeria innocua serovar 6a (strain ATCC BAA-680 / CLIP 11262)</name>
    <dbReference type="NCBI Taxonomy" id="272626"/>
    <lineage>
        <taxon>Bacteria</taxon>
        <taxon>Bacillati</taxon>
        <taxon>Bacillota</taxon>
        <taxon>Bacilli</taxon>
        <taxon>Bacillales</taxon>
        <taxon>Listeriaceae</taxon>
        <taxon>Listeria</taxon>
    </lineage>
</organism>
<evidence type="ECO:0000305" key="1"/>
<reference key="1">
    <citation type="journal article" date="2001" name="Science">
        <title>Comparative genomics of Listeria species.</title>
        <authorList>
            <person name="Glaser P."/>
            <person name="Frangeul L."/>
            <person name="Buchrieser C."/>
            <person name="Rusniok C."/>
            <person name="Amend A."/>
            <person name="Baquero F."/>
            <person name="Berche P."/>
            <person name="Bloecker H."/>
            <person name="Brandt P."/>
            <person name="Chakraborty T."/>
            <person name="Charbit A."/>
            <person name="Chetouani F."/>
            <person name="Couve E."/>
            <person name="de Daruvar A."/>
            <person name="Dehoux P."/>
            <person name="Domann E."/>
            <person name="Dominguez-Bernal G."/>
            <person name="Duchaud E."/>
            <person name="Durant L."/>
            <person name="Dussurget O."/>
            <person name="Entian K.-D."/>
            <person name="Fsihi H."/>
            <person name="Garcia-del Portillo F."/>
            <person name="Garrido P."/>
            <person name="Gautier L."/>
            <person name="Goebel W."/>
            <person name="Gomez-Lopez N."/>
            <person name="Hain T."/>
            <person name="Hauf J."/>
            <person name="Jackson D."/>
            <person name="Jones L.-M."/>
            <person name="Kaerst U."/>
            <person name="Kreft J."/>
            <person name="Kuhn M."/>
            <person name="Kunst F."/>
            <person name="Kurapkat G."/>
            <person name="Madueno E."/>
            <person name="Maitournam A."/>
            <person name="Mata Vicente J."/>
            <person name="Ng E."/>
            <person name="Nedjari H."/>
            <person name="Nordsiek G."/>
            <person name="Novella S."/>
            <person name="de Pablos B."/>
            <person name="Perez-Diaz J.-C."/>
            <person name="Purcell R."/>
            <person name="Remmel B."/>
            <person name="Rose M."/>
            <person name="Schlueter T."/>
            <person name="Simoes N."/>
            <person name="Tierrez A."/>
            <person name="Vazquez-Boland J.-A."/>
            <person name="Voss H."/>
            <person name="Wehland J."/>
            <person name="Cossart P."/>
        </authorList>
    </citation>
    <scope>NUCLEOTIDE SEQUENCE [LARGE SCALE GENOMIC DNA]</scope>
    <source>
        <strain>ATCC BAA-680 / CLIP 11262</strain>
    </source>
</reference>
<protein>
    <recommendedName>
        <fullName>Flagellin</fullName>
    </recommendedName>
</protein>
<accession>Q92DW3</accession>
<dbReference type="EMBL" id="AL596166">
    <property type="protein sequence ID" value="CAC95930.1"/>
    <property type="molecule type" value="Genomic_DNA"/>
</dbReference>
<dbReference type="PIR" id="AB1520">
    <property type="entry name" value="AB1520"/>
</dbReference>
<dbReference type="RefSeq" id="WP_003738355.1">
    <property type="nucleotide sequence ID" value="NC_003212.1"/>
</dbReference>
<dbReference type="SMR" id="Q92DW3"/>
<dbReference type="STRING" id="272626.gene:17565025"/>
<dbReference type="KEGG" id="lin:flaA"/>
<dbReference type="eggNOG" id="COG1344">
    <property type="taxonomic scope" value="Bacteria"/>
</dbReference>
<dbReference type="HOGENOM" id="CLU_011142_2_3_9"/>
<dbReference type="OrthoDB" id="9796789at2"/>
<dbReference type="Proteomes" id="UP000002513">
    <property type="component" value="Chromosome"/>
</dbReference>
<dbReference type="GO" id="GO:0009288">
    <property type="term" value="C:bacterial-type flagellum"/>
    <property type="evidence" value="ECO:0007669"/>
    <property type="project" value="UniProtKB-SubCell"/>
</dbReference>
<dbReference type="GO" id="GO:0005576">
    <property type="term" value="C:extracellular region"/>
    <property type="evidence" value="ECO:0007669"/>
    <property type="project" value="UniProtKB-SubCell"/>
</dbReference>
<dbReference type="GO" id="GO:0005198">
    <property type="term" value="F:structural molecule activity"/>
    <property type="evidence" value="ECO:0007669"/>
    <property type="project" value="InterPro"/>
</dbReference>
<dbReference type="Gene3D" id="1.20.1330.10">
    <property type="entry name" value="f41 fragment of flagellin, N-terminal domain"/>
    <property type="match status" value="1"/>
</dbReference>
<dbReference type="Gene3D" id="6.10.10.10">
    <property type="entry name" value="Flagellar export chaperone, C-terminal domain"/>
    <property type="match status" value="1"/>
</dbReference>
<dbReference type="InterPro" id="IPR001492">
    <property type="entry name" value="Flagellin"/>
</dbReference>
<dbReference type="InterPro" id="IPR046358">
    <property type="entry name" value="Flagellin_C"/>
</dbReference>
<dbReference type="InterPro" id="IPR042187">
    <property type="entry name" value="Flagellin_C_sub2"/>
</dbReference>
<dbReference type="InterPro" id="IPR001029">
    <property type="entry name" value="Flagellin_N"/>
</dbReference>
<dbReference type="NCBIfam" id="NF009447">
    <property type="entry name" value="PRK12805.1"/>
    <property type="match status" value="1"/>
</dbReference>
<dbReference type="PANTHER" id="PTHR42792">
    <property type="entry name" value="FLAGELLIN"/>
    <property type="match status" value="1"/>
</dbReference>
<dbReference type="PANTHER" id="PTHR42792:SF2">
    <property type="entry name" value="FLAGELLIN"/>
    <property type="match status" value="1"/>
</dbReference>
<dbReference type="Pfam" id="PF00700">
    <property type="entry name" value="Flagellin_C"/>
    <property type="match status" value="1"/>
</dbReference>
<dbReference type="Pfam" id="PF00669">
    <property type="entry name" value="Flagellin_N"/>
    <property type="match status" value="1"/>
</dbReference>
<dbReference type="PRINTS" id="PR00207">
    <property type="entry name" value="FLAGELLIN"/>
</dbReference>
<dbReference type="SUPFAM" id="SSF64518">
    <property type="entry name" value="Phase 1 flagellin"/>
    <property type="match status" value="1"/>
</dbReference>
<name>FLAA_LISIN</name>
<keyword id="KW-0975">Bacterial flagellum</keyword>
<keyword id="KW-0964">Secreted</keyword>
<sequence length="287" mass="30502">MKVNTNIISLKTQEYLRKNNEGMTQAQERLASGKRINSSLDDAAGLAVVTRMNVKSTGLDAASKNSSMGIDLLQTADSALSSMSSILQRMRQLAVQSSNGSFSDEDRKQYTAEFGSLIKELDHVADTTNYNNIKLLDQTATNAATQVSIQASDKANDLINIDLFNAKGLSAGTITLGSGSTVAGYSALSVADADSSQEATEAIDELINNISNGRALLGAGMSRLSYNVSNVNNQSIATKASASSIEDADMAAEMSEMTKYKILTQTSISMLSQANQTPQMLTQLINS</sequence>
<gene>
    <name type="primary">flaA</name>
    <name type="ordered locus">lin0698</name>
</gene>
<comment type="function">
    <text>Flagellin is the subunit protein which polymerizes to form the filaments of bacterial flagella.</text>
</comment>
<comment type="subcellular location">
    <subcellularLocation>
        <location>Secreted</location>
    </subcellularLocation>
    <subcellularLocation>
        <location>Bacterial flagellum</location>
    </subcellularLocation>
</comment>
<comment type="similarity">
    <text evidence="1">Belongs to the bacterial flagellin family.</text>
</comment>
<feature type="chain" id="PRO_0000182617" description="Flagellin">
    <location>
        <begin position="1"/>
        <end position="287"/>
    </location>
</feature>